<gene>
    <name type="ordered locus">KLLA0D19426g</name>
</gene>
<organism>
    <name type="scientific">Kluyveromyces lactis (strain ATCC 8585 / CBS 2359 / DSM 70799 / NBRC 1267 / NRRL Y-1140 / WM37)</name>
    <name type="common">Yeast</name>
    <name type="synonym">Candida sphaerica</name>
    <dbReference type="NCBI Taxonomy" id="284590"/>
    <lineage>
        <taxon>Eukaryota</taxon>
        <taxon>Fungi</taxon>
        <taxon>Dikarya</taxon>
        <taxon>Ascomycota</taxon>
        <taxon>Saccharomycotina</taxon>
        <taxon>Saccharomycetes</taxon>
        <taxon>Saccharomycetales</taxon>
        <taxon>Saccharomycetaceae</taxon>
        <taxon>Kluyveromyces</taxon>
    </lineage>
</organism>
<feature type="chain" id="PRO_0000399337" description="Adenylosuccinate synthetase">
    <location>
        <begin position="1"/>
        <end position="432"/>
    </location>
</feature>
<feature type="active site" description="Proton acceptor" evidence="2">
    <location>
        <position position="12"/>
    </location>
</feature>
<feature type="active site" description="Proton donor" evidence="2">
    <location>
        <position position="40"/>
    </location>
</feature>
<feature type="binding site" evidence="2">
    <location>
        <begin position="11"/>
        <end position="17"/>
    </location>
    <ligand>
        <name>GTP</name>
        <dbReference type="ChEBI" id="CHEBI:37565"/>
    </ligand>
</feature>
<feature type="binding site" description="in other chain" evidence="2">
    <location>
        <begin position="12"/>
        <end position="15"/>
    </location>
    <ligand>
        <name>IMP</name>
        <dbReference type="ChEBI" id="CHEBI:58053"/>
        <note>ligand shared between dimeric partners</note>
    </ligand>
</feature>
<feature type="binding site" evidence="2">
    <location>
        <position position="12"/>
    </location>
    <ligand>
        <name>Mg(2+)</name>
        <dbReference type="ChEBI" id="CHEBI:18420"/>
    </ligand>
</feature>
<feature type="binding site" description="in other chain" evidence="2">
    <location>
        <begin position="37"/>
        <end position="40"/>
    </location>
    <ligand>
        <name>IMP</name>
        <dbReference type="ChEBI" id="CHEBI:58053"/>
        <note>ligand shared between dimeric partners</note>
    </ligand>
</feature>
<feature type="binding site" evidence="2">
    <location>
        <begin position="39"/>
        <end position="41"/>
    </location>
    <ligand>
        <name>GTP</name>
        <dbReference type="ChEBI" id="CHEBI:37565"/>
    </ligand>
</feature>
<feature type="binding site" evidence="2">
    <location>
        <position position="39"/>
    </location>
    <ligand>
        <name>Mg(2+)</name>
        <dbReference type="ChEBI" id="CHEBI:18420"/>
    </ligand>
</feature>
<feature type="binding site" description="in other chain" evidence="2">
    <location>
        <position position="134"/>
    </location>
    <ligand>
        <name>IMP</name>
        <dbReference type="ChEBI" id="CHEBI:58053"/>
        <note>ligand shared between dimeric partners</note>
    </ligand>
</feature>
<feature type="binding site" evidence="2">
    <location>
        <position position="148"/>
    </location>
    <ligand>
        <name>IMP</name>
        <dbReference type="ChEBI" id="CHEBI:58053"/>
        <note>ligand shared between dimeric partners</note>
    </ligand>
</feature>
<feature type="binding site" description="in other chain" evidence="2">
    <location>
        <position position="230"/>
    </location>
    <ligand>
        <name>IMP</name>
        <dbReference type="ChEBI" id="CHEBI:58053"/>
        <note>ligand shared between dimeric partners</note>
    </ligand>
</feature>
<feature type="binding site" description="in other chain" evidence="2">
    <location>
        <position position="245"/>
    </location>
    <ligand>
        <name>IMP</name>
        <dbReference type="ChEBI" id="CHEBI:58053"/>
        <note>ligand shared between dimeric partners</note>
    </ligand>
</feature>
<feature type="binding site" evidence="2">
    <location>
        <begin position="305"/>
        <end position="311"/>
    </location>
    <ligand>
        <name>substrate</name>
    </ligand>
</feature>
<feature type="binding site" description="in other chain" evidence="2">
    <location>
        <position position="309"/>
    </location>
    <ligand>
        <name>IMP</name>
        <dbReference type="ChEBI" id="CHEBI:58053"/>
        <note>ligand shared between dimeric partners</note>
    </ligand>
</feature>
<feature type="binding site" evidence="2">
    <location>
        <position position="311"/>
    </location>
    <ligand>
        <name>GTP</name>
        <dbReference type="ChEBI" id="CHEBI:37565"/>
    </ligand>
</feature>
<feature type="binding site" evidence="2">
    <location>
        <begin position="337"/>
        <end position="339"/>
    </location>
    <ligand>
        <name>GTP</name>
        <dbReference type="ChEBI" id="CHEBI:37565"/>
    </ligand>
</feature>
<feature type="binding site" evidence="2">
    <location>
        <begin position="419"/>
        <end position="421"/>
    </location>
    <ligand>
        <name>GTP</name>
        <dbReference type="ChEBI" id="CHEBI:37565"/>
    </ligand>
</feature>
<sequence length="432" mass="48215">MVNVVLGSQWGDEGKGKLVDLLVGEYDIVARSAGGNNAGHTIVVNGVKYDFHMLPSGLVNPNCQNLIGNGVVIHVPSFFEELKSLEAKGLKNAKGRLFISSRAHLVFDFHQRTDKLRELELSGASKDGKNIGTTGKGIGPTYSTKASRSGLRVHHLVNDDPQAWEVFETRYRRLVETRQQRYGSFDYDPEEELQRYKSYREQLKPFVVDSVNFMHDAIKKNKKILVEGANALMLDIDFGTYPYVTSSNTGIGGVITGLGIPPRTIKEVFGVVKAYTTRVGEGPFPTEQLNEDGEKLQNIGAEFGVTTGRKRRCGWLDLVVLKYSNLINGYTSLNITKLDVLDTFKEIKVGVSYSVDGKKLESFPEDLLTLAKVEVEYVTLPGWEEDISKITNYEDLPENAQKYLKFIEDFVEVPIQWVGTGPARDAMVHKEI</sequence>
<evidence type="ECO:0000250" key="1"/>
<evidence type="ECO:0000255" key="2">
    <source>
        <dbReference type="HAMAP-Rule" id="MF_03125"/>
    </source>
</evidence>
<protein>
    <recommendedName>
        <fullName evidence="2">Adenylosuccinate synthetase</fullName>
        <shortName evidence="2">AMPSase</shortName>
        <shortName evidence="2">AdSS</shortName>
        <ecNumber evidence="2">6.3.4.4</ecNumber>
    </recommendedName>
    <alternativeName>
        <fullName evidence="2">IMP--aspartate ligase</fullName>
    </alternativeName>
</protein>
<dbReference type="EC" id="6.3.4.4" evidence="2"/>
<dbReference type="EMBL" id="CR382124">
    <property type="protein sequence ID" value="CAH01020.1"/>
    <property type="molecule type" value="Genomic_DNA"/>
</dbReference>
<dbReference type="RefSeq" id="XP_453924.1">
    <property type="nucleotide sequence ID" value="XM_453924.1"/>
</dbReference>
<dbReference type="SMR" id="Q6CQ65"/>
<dbReference type="FunCoup" id="Q6CQ65">
    <property type="interactions" value="844"/>
</dbReference>
<dbReference type="STRING" id="284590.Q6CQ65"/>
<dbReference type="PaxDb" id="284590-Q6CQ65"/>
<dbReference type="KEGG" id="kla:KLLA0_D19426g"/>
<dbReference type="eggNOG" id="KOG1355">
    <property type="taxonomic scope" value="Eukaryota"/>
</dbReference>
<dbReference type="HOGENOM" id="CLU_029848_3_2_1"/>
<dbReference type="InParanoid" id="Q6CQ65"/>
<dbReference type="OMA" id="FHHAKPI"/>
<dbReference type="UniPathway" id="UPA00075">
    <property type="reaction ID" value="UER00335"/>
</dbReference>
<dbReference type="Proteomes" id="UP000000598">
    <property type="component" value="Chromosome D"/>
</dbReference>
<dbReference type="GO" id="GO:0005737">
    <property type="term" value="C:cytoplasm"/>
    <property type="evidence" value="ECO:0007669"/>
    <property type="project" value="UniProtKB-SubCell"/>
</dbReference>
<dbReference type="GO" id="GO:0004019">
    <property type="term" value="F:adenylosuccinate synthase activity"/>
    <property type="evidence" value="ECO:0007669"/>
    <property type="project" value="UniProtKB-UniRule"/>
</dbReference>
<dbReference type="GO" id="GO:0005525">
    <property type="term" value="F:GTP binding"/>
    <property type="evidence" value="ECO:0007669"/>
    <property type="project" value="UniProtKB-UniRule"/>
</dbReference>
<dbReference type="GO" id="GO:0000287">
    <property type="term" value="F:magnesium ion binding"/>
    <property type="evidence" value="ECO:0007669"/>
    <property type="project" value="UniProtKB-UniRule"/>
</dbReference>
<dbReference type="GO" id="GO:0044208">
    <property type="term" value="P:'de novo' AMP biosynthetic process"/>
    <property type="evidence" value="ECO:0007669"/>
    <property type="project" value="UniProtKB-UniRule"/>
</dbReference>
<dbReference type="GO" id="GO:0046040">
    <property type="term" value="P:IMP metabolic process"/>
    <property type="evidence" value="ECO:0007669"/>
    <property type="project" value="TreeGrafter"/>
</dbReference>
<dbReference type="CDD" id="cd03108">
    <property type="entry name" value="AdSS"/>
    <property type="match status" value="1"/>
</dbReference>
<dbReference type="FunFam" id="3.90.170.10:FF:000001">
    <property type="entry name" value="Adenylosuccinate synthetase"/>
    <property type="match status" value="1"/>
</dbReference>
<dbReference type="FunFam" id="1.10.300.10:FF:000002">
    <property type="entry name" value="Adenylosuccinate synthetase, chloroplastic"/>
    <property type="match status" value="1"/>
</dbReference>
<dbReference type="Gene3D" id="3.40.440.10">
    <property type="entry name" value="Adenylosuccinate Synthetase, subunit A, domain 1"/>
    <property type="match status" value="1"/>
</dbReference>
<dbReference type="Gene3D" id="1.10.300.10">
    <property type="entry name" value="Adenylosuccinate Synthetase, subunit A, domain 2"/>
    <property type="match status" value="1"/>
</dbReference>
<dbReference type="Gene3D" id="3.90.170.10">
    <property type="entry name" value="Adenylosuccinate Synthetase, subunit A, domain 3"/>
    <property type="match status" value="1"/>
</dbReference>
<dbReference type="HAMAP" id="MF_00011">
    <property type="entry name" value="Adenylosucc_synth"/>
    <property type="match status" value="1"/>
</dbReference>
<dbReference type="InterPro" id="IPR018220">
    <property type="entry name" value="Adenylosuccin_syn_GTP-bd"/>
</dbReference>
<dbReference type="InterPro" id="IPR033128">
    <property type="entry name" value="Adenylosuccin_syn_Lys_AS"/>
</dbReference>
<dbReference type="InterPro" id="IPR042109">
    <property type="entry name" value="Adenylosuccinate_synth_dom1"/>
</dbReference>
<dbReference type="InterPro" id="IPR042110">
    <property type="entry name" value="Adenylosuccinate_synth_dom2"/>
</dbReference>
<dbReference type="InterPro" id="IPR042111">
    <property type="entry name" value="Adenylosuccinate_synth_dom3"/>
</dbReference>
<dbReference type="InterPro" id="IPR001114">
    <property type="entry name" value="Adenylosuccinate_synthetase"/>
</dbReference>
<dbReference type="InterPro" id="IPR027417">
    <property type="entry name" value="P-loop_NTPase"/>
</dbReference>
<dbReference type="NCBIfam" id="NF002223">
    <property type="entry name" value="PRK01117.1"/>
    <property type="match status" value="1"/>
</dbReference>
<dbReference type="NCBIfam" id="TIGR00184">
    <property type="entry name" value="purA"/>
    <property type="match status" value="1"/>
</dbReference>
<dbReference type="PANTHER" id="PTHR11846">
    <property type="entry name" value="ADENYLOSUCCINATE SYNTHETASE"/>
    <property type="match status" value="1"/>
</dbReference>
<dbReference type="PANTHER" id="PTHR11846:SF0">
    <property type="entry name" value="ADENYLOSUCCINATE SYNTHETASE"/>
    <property type="match status" value="1"/>
</dbReference>
<dbReference type="Pfam" id="PF00709">
    <property type="entry name" value="Adenylsucc_synt"/>
    <property type="match status" value="1"/>
</dbReference>
<dbReference type="SMART" id="SM00788">
    <property type="entry name" value="Adenylsucc_synt"/>
    <property type="match status" value="1"/>
</dbReference>
<dbReference type="SUPFAM" id="SSF52540">
    <property type="entry name" value="P-loop containing nucleoside triphosphate hydrolases"/>
    <property type="match status" value="1"/>
</dbReference>
<dbReference type="PROSITE" id="PS01266">
    <property type="entry name" value="ADENYLOSUCCIN_SYN_1"/>
    <property type="match status" value="1"/>
</dbReference>
<dbReference type="PROSITE" id="PS00513">
    <property type="entry name" value="ADENYLOSUCCIN_SYN_2"/>
    <property type="match status" value="1"/>
</dbReference>
<comment type="function">
    <text evidence="1">Plays an important role in the de novo pathway and in the salvage pathway of purine nucleotide biosynthesis. Catalyzes the first committed step in the biosynthesis of AMP from IMP (By similarity).</text>
</comment>
<comment type="catalytic activity">
    <reaction evidence="2">
        <text>IMP + L-aspartate + GTP = N(6)-(1,2-dicarboxyethyl)-AMP + GDP + phosphate + 2 H(+)</text>
        <dbReference type="Rhea" id="RHEA:15753"/>
        <dbReference type="ChEBI" id="CHEBI:15378"/>
        <dbReference type="ChEBI" id="CHEBI:29991"/>
        <dbReference type="ChEBI" id="CHEBI:37565"/>
        <dbReference type="ChEBI" id="CHEBI:43474"/>
        <dbReference type="ChEBI" id="CHEBI:57567"/>
        <dbReference type="ChEBI" id="CHEBI:58053"/>
        <dbReference type="ChEBI" id="CHEBI:58189"/>
        <dbReference type="EC" id="6.3.4.4"/>
    </reaction>
</comment>
<comment type="cofactor">
    <cofactor evidence="2">
        <name>Mg(2+)</name>
        <dbReference type="ChEBI" id="CHEBI:18420"/>
    </cofactor>
    <text evidence="2">Binds 1 Mg(2+) ion per subunit.</text>
</comment>
<comment type="pathway">
    <text evidence="2">Purine metabolism; AMP biosynthesis via de novo pathway; AMP from IMP: step 1/2.</text>
</comment>
<comment type="subunit">
    <text evidence="2">Homodimer.</text>
</comment>
<comment type="subcellular location">
    <subcellularLocation>
        <location evidence="2">Cytoplasm</location>
    </subcellularLocation>
</comment>
<comment type="similarity">
    <text evidence="2">Belongs to the adenylosuccinate synthetase family.</text>
</comment>
<name>PURA_KLULA</name>
<reference key="1">
    <citation type="journal article" date="2004" name="Nature">
        <title>Genome evolution in yeasts.</title>
        <authorList>
            <person name="Dujon B."/>
            <person name="Sherman D."/>
            <person name="Fischer G."/>
            <person name="Durrens P."/>
            <person name="Casaregola S."/>
            <person name="Lafontaine I."/>
            <person name="de Montigny J."/>
            <person name="Marck C."/>
            <person name="Neuveglise C."/>
            <person name="Talla E."/>
            <person name="Goffard N."/>
            <person name="Frangeul L."/>
            <person name="Aigle M."/>
            <person name="Anthouard V."/>
            <person name="Babour A."/>
            <person name="Barbe V."/>
            <person name="Barnay S."/>
            <person name="Blanchin S."/>
            <person name="Beckerich J.-M."/>
            <person name="Beyne E."/>
            <person name="Bleykasten C."/>
            <person name="Boisrame A."/>
            <person name="Boyer J."/>
            <person name="Cattolico L."/>
            <person name="Confanioleri F."/>
            <person name="de Daruvar A."/>
            <person name="Despons L."/>
            <person name="Fabre E."/>
            <person name="Fairhead C."/>
            <person name="Ferry-Dumazet H."/>
            <person name="Groppi A."/>
            <person name="Hantraye F."/>
            <person name="Hennequin C."/>
            <person name="Jauniaux N."/>
            <person name="Joyet P."/>
            <person name="Kachouri R."/>
            <person name="Kerrest A."/>
            <person name="Koszul R."/>
            <person name="Lemaire M."/>
            <person name="Lesur I."/>
            <person name="Ma L."/>
            <person name="Muller H."/>
            <person name="Nicaud J.-M."/>
            <person name="Nikolski M."/>
            <person name="Oztas S."/>
            <person name="Ozier-Kalogeropoulos O."/>
            <person name="Pellenz S."/>
            <person name="Potier S."/>
            <person name="Richard G.-F."/>
            <person name="Straub M.-L."/>
            <person name="Suleau A."/>
            <person name="Swennen D."/>
            <person name="Tekaia F."/>
            <person name="Wesolowski-Louvel M."/>
            <person name="Westhof E."/>
            <person name="Wirth B."/>
            <person name="Zeniou-Meyer M."/>
            <person name="Zivanovic Y."/>
            <person name="Bolotin-Fukuhara M."/>
            <person name="Thierry A."/>
            <person name="Bouchier C."/>
            <person name="Caudron B."/>
            <person name="Scarpelli C."/>
            <person name="Gaillardin C."/>
            <person name="Weissenbach J."/>
            <person name="Wincker P."/>
            <person name="Souciet J.-L."/>
        </authorList>
    </citation>
    <scope>NUCLEOTIDE SEQUENCE [LARGE SCALE GENOMIC DNA]</scope>
    <source>
        <strain>ATCC 8585 / CBS 2359 / DSM 70799 / NBRC 1267 / NRRL Y-1140 / WM37</strain>
    </source>
</reference>
<proteinExistence type="inferred from homology"/>
<accession>Q6CQ65</accession>
<keyword id="KW-0963">Cytoplasm</keyword>
<keyword id="KW-0342">GTP-binding</keyword>
<keyword id="KW-0436">Ligase</keyword>
<keyword id="KW-0460">Magnesium</keyword>
<keyword id="KW-0479">Metal-binding</keyword>
<keyword id="KW-0547">Nucleotide-binding</keyword>
<keyword id="KW-0658">Purine biosynthesis</keyword>
<keyword id="KW-1185">Reference proteome</keyword>